<keyword id="KW-0012">Acyltransferase</keyword>
<keyword id="KW-0025">Alternative splicing</keyword>
<keyword id="KW-0963">Cytoplasm</keyword>
<keyword id="KW-0256">Endoplasmic reticulum</keyword>
<keyword id="KW-0319">Glycerol metabolism</keyword>
<keyword id="KW-0325">Glycoprotein</keyword>
<keyword id="KW-0444">Lipid biosynthesis</keyword>
<keyword id="KW-0443">Lipid metabolism</keyword>
<keyword id="KW-0472">Membrane</keyword>
<keyword id="KW-1267">Proteomics identification</keyword>
<keyword id="KW-1185">Reference proteome</keyword>
<keyword id="KW-0808">Transferase</keyword>
<keyword id="KW-0812">Transmembrane</keyword>
<keyword id="KW-1133">Transmembrane helix</keyword>
<keyword id="KW-0832">Ubl conjugation</keyword>
<reference key="1">
    <citation type="journal article" date="2003" name="J. Biol. Chem.">
        <title>Identification of acyl coenzyme A:monoacylglycerol acyltransferase 3, an intestinal specific enzyme implicated in dietary fat absorption.</title>
        <authorList>
            <person name="Cheng D."/>
            <person name="Nelson T.C."/>
            <person name="Chen J."/>
            <person name="Walker S.G."/>
            <person name="Wardwell-Swanson J."/>
            <person name="Meegalla R."/>
            <person name="Taub R."/>
            <person name="Billheimer J.T."/>
            <person name="Ramaker M."/>
            <person name="Feder J.N."/>
        </authorList>
    </citation>
    <scope>NUCLEOTIDE SEQUENCE [MRNA] (ISOFORM 1)</scope>
    <scope>FUNCTION</scope>
    <scope>CATALYTIC ACTIVITY</scope>
    <scope>BIOPHYSICOCHEMICAL PROPERTIES</scope>
    <scope>SUBCELLULAR LOCATION</scope>
    <scope>TISSUE SPECIFICITY</scope>
</reference>
<reference key="2">
    <citation type="journal article" date="2003" name="Genome Res.">
        <title>The secreted protein discovery initiative (SPDI), a large-scale effort to identify novel human secreted and transmembrane proteins: a bioinformatics assessment.</title>
        <authorList>
            <person name="Clark H.F."/>
            <person name="Gurney A.L."/>
            <person name="Abaya E."/>
            <person name="Baker K."/>
            <person name="Baldwin D.T."/>
            <person name="Brush J."/>
            <person name="Chen J."/>
            <person name="Chow B."/>
            <person name="Chui C."/>
            <person name="Crowley C."/>
            <person name="Currell B."/>
            <person name="Deuel B."/>
            <person name="Dowd P."/>
            <person name="Eaton D."/>
            <person name="Foster J.S."/>
            <person name="Grimaldi C."/>
            <person name="Gu Q."/>
            <person name="Hass P.E."/>
            <person name="Heldens S."/>
            <person name="Huang A."/>
            <person name="Kim H.S."/>
            <person name="Klimowski L."/>
            <person name="Jin Y."/>
            <person name="Johnson S."/>
            <person name="Lee J."/>
            <person name="Lewis L."/>
            <person name="Liao D."/>
            <person name="Mark M.R."/>
            <person name="Robbie E."/>
            <person name="Sanchez C."/>
            <person name="Schoenfeld J."/>
            <person name="Seshagiri S."/>
            <person name="Simmons L."/>
            <person name="Singh J."/>
            <person name="Smith V."/>
            <person name="Stinson J."/>
            <person name="Vagts A."/>
            <person name="Vandlen R.L."/>
            <person name="Watanabe C."/>
            <person name="Wieand D."/>
            <person name="Woods K."/>
            <person name="Xie M.-H."/>
            <person name="Yansura D.G."/>
            <person name="Yi S."/>
            <person name="Yu G."/>
            <person name="Yuan J."/>
            <person name="Zhang M."/>
            <person name="Zhang Z."/>
            <person name="Goddard A.D."/>
            <person name="Wood W.I."/>
            <person name="Godowski P.J."/>
            <person name="Gray A.M."/>
        </authorList>
    </citation>
    <scope>NUCLEOTIDE SEQUENCE [LARGE SCALE MRNA] (ISOFORM 1)</scope>
</reference>
<reference key="3">
    <citation type="journal article" date="2003" name="Nature">
        <title>The DNA sequence of human chromosome 7.</title>
        <authorList>
            <person name="Hillier L.W."/>
            <person name="Fulton R.S."/>
            <person name="Fulton L.A."/>
            <person name="Graves T.A."/>
            <person name="Pepin K.H."/>
            <person name="Wagner-McPherson C."/>
            <person name="Layman D."/>
            <person name="Maas J."/>
            <person name="Jaeger S."/>
            <person name="Walker R."/>
            <person name="Wylie K."/>
            <person name="Sekhon M."/>
            <person name="Becker M.C."/>
            <person name="O'Laughlin M.D."/>
            <person name="Schaller M.E."/>
            <person name="Fewell G.A."/>
            <person name="Delehaunty K.D."/>
            <person name="Miner T.L."/>
            <person name="Nash W.E."/>
            <person name="Cordes M."/>
            <person name="Du H."/>
            <person name="Sun H."/>
            <person name="Edwards J."/>
            <person name="Bradshaw-Cordum H."/>
            <person name="Ali J."/>
            <person name="Andrews S."/>
            <person name="Isak A."/>
            <person name="Vanbrunt A."/>
            <person name="Nguyen C."/>
            <person name="Du F."/>
            <person name="Lamar B."/>
            <person name="Courtney L."/>
            <person name="Kalicki J."/>
            <person name="Ozersky P."/>
            <person name="Bielicki L."/>
            <person name="Scott K."/>
            <person name="Holmes A."/>
            <person name="Harkins R."/>
            <person name="Harris A."/>
            <person name="Strong C.M."/>
            <person name="Hou S."/>
            <person name="Tomlinson C."/>
            <person name="Dauphin-Kohlberg S."/>
            <person name="Kozlowicz-Reilly A."/>
            <person name="Leonard S."/>
            <person name="Rohlfing T."/>
            <person name="Rock S.M."/>
            <person name="Tin-Wollam A.-M."/>
            <person name="Abbott A."/>
            <person name="Minx P."/>
            <person name="Maupin R."/>
            <person name="Strowmatt C."/>
            <person name="Latreille P."/>
            <person name="Miller N."/>
            <person name="Johnson D."/>
            <person name="Murray J."/>
            <person name="Woessner J.P."/>
            <person name="Wendl M.C."/>
            <person name="Yang S.-P."/>
            <person name="Schultz B.R."/>
            <person name="Wallis J.W."/>
            <person name="Spieth J."/>
            <person name="Bieri T.A."/>
            <person name="Nelson J.O."/>
            <person name="Berkowicz N."/>
            <person name="Wohldmann P.E."/>
            <person name="Cook L.L."/>
            <person name="Hickenbotham M.T."/>
            <person name="Eldred J."/>
            <person name="Williams D."/>
            <person name="Bedell J.A."/>
            <person name="Mardis E.R."/>
            <person name="Clifton S.W."/>
            <person name="Chissoe S.L."/>
            <person name="Marra M.A."/>
            <person name="Raymond C."/>
            <person name="Haugen E."/>
            <person name="Gillett W."/>
            <person name="Zhou Y."/>
            <person name="James R."/>
            <person name="Phelps K."/>
            <person name="Iadanoto S."/>
            <person name="Bubb K."/>
            <person name="Simms E."/>
            <person name="Levy R."/>
            <person name="Clendenning J."/>
            <person name="Kaul R."/>
            <person name="Kent W.J."/>
            <person name="Furey T.S."/>
            <person name="Baertsch R.A."/>
            <person name="Brent M.R."/>
            <person name="Keibler E."/>
            <person name="Flicek P."/>
            <person name="Bork P."/>
            <person name="Suyama M."/>
            <person name="Bailey J.A."/>
            <person name="Portnoy M.E."/>
            <person name="Torrents D."/>
            <person name="Chinwalla A.T."/>
            <person name="Gish W.R."/>
            <person name="Eddy S.R."/>
            <person name="McPherson J.D."/>
            <person name="Olson M.V."/>
            <person name="Eichler E.E."/>
            <person name="Green E.D."/>
            <person name="Waterston R.H."/>
            <person name="Wilson R.K."/>
        </authorList>
    </citation>
    <scope>NUCLEOTIDE SEQUENCE [LARGE SCALE GENOMIC DNA]</scope>
</reference>
<reference key="4">
    <citation type="journal article" date="2004" name="Genome Res.">
        <title>The status, quality, and expansion of the NIH full-length cDNA project: the Mammalian Gene Collection (MGC).</title>
        <authorList>
            <consortium name="The MGC Project Team"/>
        </authorList>
    </citation>
    <scope>NUCLEOTIDE SEQUENCE [LARGE SCALE MRNA] (ISOFORMS 1; 2 AND 3)</scope>
</reference>
<reference key="5">
    <citation type="journal article" date="2005" name="Biochim. Biophys. Acta">
        <title>Acyl coenzyme A dependent retinol esterification by acyl coenzyme A: diacylglycerol acyltransferase 1.</title>
        <authorList>
            <person name="Orland M.D."/>
            <person name="Anwar K."/>
            <person name="Cromley D."/>
            <person name="Chu C.H."/>
            <person name="Chen L."/>
            <person name="Billheimer J.T."/>
            <person name="Hussain M.M."/>
            <person name="Cheng D."/>
        </authorList>
    </citation>
    <scope>CATALYTIC ACTIVITY</scope>
</reference>
<reference key="6">
    <citation type="journal article" date="2008" name="J. Biol. Chem.">
        <title>Acylation of acylglycerols by acyl coenzyme A:diacylglycerol acyltransferase 1 (DGAT1). Functional importance of DGAT1 in the intestinal fat absorption.</title>
        <authorList>
            <person name="Cheng D."/>
            <person name="Iqbal J."/>
            <person name="Devenny J."/>
            <person name="Chu C.H."/>
            <person name="Chen L."/>
            <person name="Dong J."/>
            <person name="Seethala R."/>
            <person name="Keim W.J."/>
            <person name="Azzara A.V."/>
            <person name="Lawrence R.M."/>
            <person name="Pelleymounter M.A."/>
            <person name="Hussain M.M."/>
        </authorList>
    </citation>
    <scope>CATALYTIC ACTIVITY</scope>
</reference>
<reference key="7">
    <citation type="journal article" date="2016" name="Biochem. Biophys. Res. Commun.">
        <title>Biochemical characterization of human acyl coenzyme A: 2-monoacylglycerol acyltransferase-3 (MGAT3).</title>
        <authorList>
            <person name="Brandt C."/>
            <person name="McFie P.J."/>
            <person name="Stone S.J."/>
        </authorList>
    </citation>
    <scope>FUNCTION</scope>
    <scope>CATALYTIC ACTIVITY</scope>
    <scope>SUBCELLULAR LOCATION</scope>
    <scope>MUTAGENESIS OF CYS-265</scope>
    <scope>UBIQUITINATION</scope>
</reference>
<reference key="8">
    <citation type="journal article" date="2017" name="J. Lipid Res.">
        <title>Synthesis of neutral ether lipid monoalkyl-diacylglycerol by lipid acyltransferases.</title>
        <authorList>
            <person name="Ma Z."/>
            <person name="Onorato J.M."/>
            <person name="Chen L."/>
            <person name="Nelson D.W."/>
            <person name="Yen C.E."/>
            <person name="Cheng D."/>
        </authorList>
    </citation>
    <scope>CATALYTIC ACTIVITY</scope>
    <scope>FUNCTION</scope>
</reference>
<name>MOGT3_HUMAN</name>
<protein>
    <recommendedName>
        <fullName evidence="8">2-acylglycerol O-acyltransferase 3</fullName>
        <ecNumber evidence="4">2.3.1.20</ecNumber>
        <ecNumber evidence="4">2.3.1.22</ecNumber>
    </recommendedName>
    <alternativeName>
        <fullName evidence="7">Acyl-CoA:monoacylglycerol acyltransferase 3</fullName>
        <shortName evidence="7">MGAT3</shortName>
    </alternativeName>
    <alternativeName>
        <fullName>Diacylglycerol O-acyltransferase candidate 7</fullName>
        <shortName>hDC7</shortName>
    </alternativeName>
    <alternativeName>
        <fullName>Diacylglycerol acyltransferase 2-like protein 7</fullName>
    </alternativeName>
    <alternativeName>
        <fullName>Monoacylglycerol O-acyltransferase 3</fullName>
    </alternativeName>
</protein>
<sequence length="341" mass="38730">MGVATTLQPPTTSKTLQKQHLEAVGAYQYVLTFLFMGPFFSLLVFVLLFTSLWPFSVFYLVWLYVDWDTPNQGGRRSEWIRNRAIWRQLRDYYPVKLVKTAELPPDRNYVLGAHPHGIMCTGFLCNFSTESNGFSQLFPGLRPWLAVLAGLFYLPVYRDYIMSFGLCPVSRQSLDFILSQPQLGQAVVIMVGGAHEALYSVPGEHCLTLQKRKGFVRLALRHGASLVPVYSFGENDIFRLKAFATGSWQHWCQLTFKKLMGFSPCIFWGRGLFSATSWGLLPFAVPITTVVGRPIPVPQRLHPTEEEVNHYHALYMTALEQLFEEHKESCGVPASTCLTFI</sequence>
<accession>Q86VF5</accession>
<accession>Q496A6</accession>
<accession>Q496A7</accession>
<accession>Q496A8</accession>
<accession>Q9UDW7</accession>
<organism>
    <name type="scientific">Homo sapiens</name>
    <name type="common">Human</name>
    <dbReference type="NCBI Taxonomy" id="9606"/>
    <lineage>
        <taxon>Eukaryota</taxon>
        <taxon>Metazoa</taxon>
        <taxon>Chordata</taxon>
        <taxon>Craniata</taxon>
        <taxon>Vertebrata</taxon>
        <taxon>Euteleostomi</taxon>
        <taxon>Mammalia</taxon>
        <taxon>Eutheria</taxon>
        <taxon>Euarchontoglires</taxon>
        <taxon>Primates</taxon>
        <taxon>Haplorrhini</taxon>
        <taxon>Catarrhini</taxon>
        <taxon>Hominidae</taxon>
        <taxon>Homo</taxon>
    </lineage>
</organism>
<dbReference type="EC" id="2.3.1.20" evidence="4"/>
<dbReference type="EC" id="2.3.1.22" evidence="4"/>
<dbReference type="EMBL" id="AY229854">
    <property type="protein sequence ID" value="AAO63579.1"/>
    <property type="molecule type" value="mRNA"/>
</dbReference>
<dbReference type="EMBL" id="AY358200">
    <property type="protein sequence ID" value="AAQ88567.1"/>
    <property type="molecule type" value="mRNA"/>
</dbReference>
<dbReference type="EMBL" id="AC004876">
    <property type="protein sequence ID" value="AAD45832.1"/>
    <property type="status" value="ALT_SEQ"/>
    <property type="molecule type" value="Genomic_DNA"/>
</dbReference>
<dbReference type="EMBL" id="BC100953">
    <property type="protein sequence ID" value="AAI00954.1"/>
    <property type="molecule type" value="mRNA"/>
</dbReference>
<dbReference type="EMBL" id="BC100954">
    <property type="protein sequence ID" value="AAI00955.1"/>
    <property type="molecule type" value="mRNA"/>
</dbReference>
<dbReference type="EMBL" id="BC100955">
    <property type="protein sequence ID" value="AAI00956.1"/>
    <property type="molecule type" value="mRNA"/>
</dbReference>
<dbReference type="CCDS" id="CCDS5714.1">
    <molecule id="Q86VF5-1"/>
</dbReference>
<dbReference type="CCDS" id="CCDS75643.1">
    <molecule id="Q86VF5-2"/>
</dbReference>
<dbReference type="RefSeq" id="NP_001274076.1">
    <molecule id="Q86VF5-2"/>
    <property type="nucleotide sequence ID" value="NM_001287147.2"/>
</dbReference>
<dbReference type="RefSeq" id="NP_835470.1">
    <molecule id="Q86VF5-1"/>
    <property type="nucleotide sequence ID" value="NM_178176.4"/>
</dbReference>
<dbReference type="RefSeq" id="XP_005250366.1">
    <molecule id="Q86VF5-3"/>
    <property type="nucleotide sequence ID" value="XM_005250309.4"/>
</dbReference>
<dbReference type="RefSeq" id="XP_054214087.1">
    <molecule id="Q86VF5-3"/>
    <property type="nucleotide sequence ID" value="XM_054358112.1"/>
</dbReference>
<dbReference type="BioGRID" id="131392">
    <property type="interactions" value="23"/>
</dbReference>
<dbReference type="FunCoup" id="Q86VF5">
    <property type="interactions" value="299"/>
</dbReference>
<dbReference type="IntAct" id="Q86VF5">
    <property type="interactions" value="26"/>
</dbReference>
<dbReference type="STRING" id="9606.ENSP00000223114"/>
<dbReference type="BindingDB" id="Q86VF5"/>
<dbReference type="ChEMBL" id="CHEMBL5465325"/>
<dbReference type="SwissLipids" id="SLP:000000307"/>
<dbReference type="GlyCosmos" id="Q86VF5">
    <property type="glycosylation" value="1 site, No reported glycans"/>
</dbReference>
<dbReference type="GlyGen" id="Q86VF5">
    <property type="glycosylation" value="2 sites, 1 O-linked glycan (1 site)"/>
</dbReference>
<dbReference type="BioMuta" id="MOGAT3"/>
<dbReference type="DMDM" id="74727570"/>
<dbReference type="jPOST" id="Q86VF5"/>
<dbReference type="MassIVE" id="Q86VF5"/>
<dbReference type="PaxDb" id="9606-ENSP00000223114"/>
<dbReference type="PeptideAtlas" id="Q86VF5"/>
<dbReference type="Antibodypedia" id="2307">
    <property type="antibodies" value="102 antibodies from 23 providers"/>
</dbReference>
<dbReference type="DNASU" id="346606"/>
<dbReference type="Ensembl" id="ENST00000223114.9">
    <molecule id="Q86VF5-1"/>
    <property type="protein sequence ID" value="ENSP00000223114.4"/>
    <property type="gene ID" value="ENSG00000106384.12"/>
</dbReference>
<dbReference type="Ensembl" id="ENST00000379423.3">
    <molecule id="Q86VF5-2"/>
    <property type="protein sequence ID" value="ENSP00000368734.3"/>
    <property type="gene ID" value="ENSG00000106384.12"/>
</dbReference>
<dbReference type="Ensembl" id="ENST00000440203.6">
    <molecule id="Q86VF5-3"/>
    <property type="protein sequence ID" value="ENSP00000403756.2"/>
    <property type="gene ID" value="ENSG00000106384.12"/>
</dbReference>
<dbReference type="GeneID" id="346606"/>
<dbReference type="KEGG" id="hsa:346606"/>
<dbReference type="MANE-Select" id="ENST00000223114.9">
    <property type="protein sequence ID" value="ENSP00000223114.4"/>
    <property type="RefSeq nucleotide sequence ID" value="NM_178176.4"/>
    <property type="RefSeq protein sequence ID" value="NP_835470.1"/>
</dbReference>
<dbReference type="UCSC" id="uc003uyc.5">
    <molecule id="Q86VF5-1"/>
    <property type="organism name" value="human"/>
</dbReference>
<dbReference type="AGR" id="HGNC:23249"/>
<dbReference type="CTD" id="346606"/>
<dbReference type="DisGeNET" id="346606"/>
<dbReference type="GeneCards" id="MOGAT3"/>
<dbReference type="HGNC" id="HGNC:23249">
    <property type="gene designation" value="MOGAT3"/>
</dbReference>
<dbReference type="HPA" id="ENSG00000106384">
    <property type="expression patterns" value="Group enriched (intestine, liver)"/>
</dbReference>
<dbReference type="MIM" id="610184">
    <property type="type" value="gene"/>
</dbReference>
<dbReference type="neXtProt" id="NX_Q86VF5"/>
<dbReference type="OpenTargets" id="ENSG00000106384"/>
<dbReference type="PharmGKB" id="PA134959238"/>
<dbReference type="VEuPathDB" id="HostDB:ENSG00000106384"/>
<dbReference type="eggNOG" id="KOG0831">
    <property type="taxonomic scope" value="Eukaryota"/>
</dbReference>
<dbReference type="GeneTree" id="ENSGT01030000234582"/>
<dbReference type="HOGENOM" id="CLU_023995_0_0_1"/>
<dbReference type="InParanoid" id="Q86VF5"/>
<dbReference type="OMA" id="VRKWRVW"/>
<dbReference type="OrthoDB" id="264532at2759"/>
<dbReference type="PAN-GO" id="Q86VF5">
    <property type="GO annotations" value="3 GO annotations based on evolutionary models"/>
</dbReference>
<dbReference type="PhylomeDB" id="Q86VF5"/>
<dbReference type="TreeFam" id="TF314707"/>
<dbReference type="BRENDA" id="2.3.1.22">
    <property type="organism ID" value="2681"/>
</dbReference>
<dbReference type="PathwayCommons" id="Q86VF5"/>
<dbReference type="Reactome" id="R-HSA-75109">
    <property type="pathway name" value="Triglyceride biosynthesis"/>
</dbReference>
<dbReference type="SignaLink" id="Q86VF5"/>
<dbReference type="UniPathway" id="UPA00282"/>
<dbReference type="BioGRID-ORCS" id="346606">
    <property type="hits" value="10 hits in 1144 CRISPR screens"/>
</dbReference>
<dbReference type="GenomeRNAi" id="346606"/>
<dbReference type="Pharos" id="Q86VF5">
    <property type="development level" value="Tbio"/>
</dbReference>
<dbReference type="PRO" id="PR:Q86VF5"/>
<dbReference type="Proteomes" id="UP000005640">
    <property type="component" value="Chromosome 7"/>
</dbReference>
<dbReference type="RNAct" id="Q86VF5">
    <property type="molecule type" value="protein"/>
</dbReference>
<dbReference type="Bgee" id="ENSG00000106384">
    <property type="expression patterns" value="Expressed in mucosa of transverse colon and 33 other cell types or tissues"/>
</dbReference>
<dbReference type="GO" id="GO:0005789">
    <property type="term" value="C:endoplasmic reticulum membrane"/>
    <property type="evidence" value="ECO:0000314"/>
    <property type="project" value="UniProtKB"/>
</dbReference>
<dbReference type="GO" id="GO:1990578">
    <property type="term" value="C:perinuclear endoplasmic reticulum membrane"/>
    <property type="evidence" value="ECO:0000314"/>
    <property type="project" value="UniProtKB"/>
</dbReference>
<dbReference type="GO" id="GO:0003846">
    <property type="term" value="F:2-acylglycerol O-acyltransferase activity"/>
    <property type="evidence" value="ECO:0000314"/>
    <property type="project" value="UniProtKB"/>
</dbReference>
<dbReference type="GO" id="GO:0004144">
    <property type="term" value="F:diacylglycerol O-acyltransferase activity"/>
    <property type="evidence" value="ECO:0000314"/>
    <property type="project" value="UniProtKB"/>
</dbReference>
<dbReference type="GO" id="GO:0006071">
    <property type="term" value="P:glycerol metabolic process"/>
    <property type="evidence" value="ECO:0007669"/>
    <property type="project" value="UniProtKB-KW"/>
</dbReference>
<dbReference type="GO" id="GO:0006640">
    <property type="term" value="P:monoacylglycerol biosynthetic process"/>
    <property type="evidence" value="ECO:0000314"/>
    <property type="project" value="UniProtKB"/>
</dbReference>
<dbReference type="GO" id="GO:0019432">
    <property type="term" value="P:triglyceride biosynthetic process"/>
    <property type="evidence" value="ECO:0000314"/>
    <property type="project" value="UniProtKB"/>
</dbReference>
<dbReference type="CDD" id="cd07987">
    <property type="entry name" value="LPLAT_MGAT-like"/>
    <property type="match status" value="1"/>
</dbReference>
<dbReference type="InterPro" id="IPR007130">
    <property type="entry name" value="DAGAT"/>
</dbReference>
<dbReference type="PANTHER" id="PTHR12317:SF36">
    <property type="entry name" value="2-ACYLGLYCEROL O-ACYLTRANSFERASE 3"/>
    <property type="match status" value="1"/>
</dbReference>
<dbReference type="PANTHER" id="PTHR12317">
    <property type="entry name" value="DIACYLGLYCEROL O-ACYLTRANSFERASE"/>
    <property type="match status" value="1"/>
</dbReference>
<dbReference type="Pfam" id="PF03982">
    <property type="entry name" value="DAGAT"/>
    <property type="match status" value="1"/>
</dbReference>
<proteinExistence type="evidence at protein level"/>
<comment type="function">
    <text evidence="2 4 5">Catalyzes the formation of diacylglycerol from 2-monoacylglycerol and fatty acyl-CoA. Also able to catalyze the terminal step in triacylglycerol synthesis by using diacylglycerol and fatty acyl-CoA as substrates. Has a preference toward palmitoyl-CoA and oleoyl-CoA. May be involved in absorption of dietary fat in the small intestine by catalyzing the resynthesis of triacylglycerol in enterocytes. Also able to use 1-monoalkylglycerol (1-MAkG) as an acyl acceptor for the synthesis of monoalkyl-monoacylglycerol (MAMAG) (PubMed:28420705).</text>
</comment>
<comment type="catalytic activity">
    <reaction evidence="2 4">
        <text>a 2-acylglycerol + an acyl-CoA = a 1,2-diacylglycerol + CoA</text>
        <dbReference type="Rhea" id="RHEA:16741"/>
        <dbReference type="ChEBI" id="CHEBI:17389"/>
        <dbReference type="ChEBI" id="CHEBI:49172"/>
        <dbReference type="ChEBI" id="CHEBI:57287"/>
        <dbReference type="ChEBI" id="CHEBI:58342"/>
        <dbReference type="EC" id="2.3.1.22"/>
    </reaction>
    <physiologicalReaction direction="left-to-right" evidence="8">
        <dbReference type="Rhea" id="RHEA:16742"/>
    </physiologicalReaction>
</comment>
<comment type="catalytic activity">
    <reaction evidence="2 4">
        <text>an acyl-CoA + a 1,2-diacyl-sn-glycerol = a triacyl-sn-glycerol + CoA</text>
        <dbReference type="Rhea" id="RHEA:10868"/>
        <dbReference type="ChEBI" id="CHEBI:17815"/>
        <dbReference type="ChEBI" id="CHEBI:57287"/>
        <dbReference type="ChEBI" id="CHEBI:58342"/>
        <dbReference type="ChEBI" id="CHEBI:64615"/>
        <dbReference type="EC" id="2.3.1.20"/>
    </reaction>
    <physiologicalReaction direction="left-to-right" evidence="8">
        <dbReference type="Rhea" id="RHEA:10869"/>
    </physiologicalReaction>
</comment>
<comment type="catalytic activity">
    <reaction evidence="2">
        <text>2-(9Z-octadecenoyl)-glycerol + (9Z)-octadecenoyl-CoA = 1,2-di-(9Z-octadecenoyl)-sn-glycerol + CoA</text>
        <dbReference type="Rhea" id="RHEA:37911"/>
        <dbReference type="ChEBI" id="CHEBI:52333"/>
        <dbReference type="ChEBI" id="CHEBI:57287"/>
        <dbReference type="ChEBI" id="CHEBI:57387"/>
        <dbReference type="ChEBI" id="CHEBI:73990"/>
    </reaction>
    <physiologicalReaction direction="left-to-right" evidence="9">
        <dbReference type="Rhea" id="RHEA:37912"/>
    </physiologicalReaction>
</comment>
<comment type="catalytic activity">
    <reaction evidence="2">
        <text>2-(9Z-octadecenoyl)-glycerol + hexadecanoyl-CoA = 1-hexadecanoyl-2-(9Z-octadecenoyl)-sn-glycerol + CoA</text>
        <dbReference type="Rhea" id="RHEA:38071"/>
        <dbReference type="ChEBI" id="CHEBI:57287"/>
        <dbReference type="ChEBI" id="CHEBI:57379"/>
        <dbReference type="ChEBI" id="CHEBI:73990"/>
        <dbReference type="ChEBI" id="CHEBI:75466"/>
    </reaction>
    <physiologicalReaction direction="left-to-right" evidence="9">
        <dbReference type="Rhea" id="RHEA:38072"/>
    </physiologicalReaction>
</comment>
<comment type="catalytic activity">
    <reaction evidence="2">
        <text>1,2-di-(9Z-octadecenoyl)-sn-glycerol + (9Z)-octadecenoyl-CoA = 1,2,3-tri-(9Z-octadecenoyl)-glycerol + CoA</text>
        <dbReference type="Rhea" id="RHEA:38219"/>
        <dbReference type="ChEBI" id="CHEBI:52333"/>
        <dbReference type="ChEBI" id="CHEBI:53753"/>
        <dbReference type="ChEBI" id="CHEBI:57287"/>
        <dbReference type="ChEBI" id="CHEBI:57387"/>
    </reaction>
    <physiologicalReaction direction="left-to-right" evidence="9">
        <dbReference type="Rhea" id="RHEA:38220"/>
    </physiologicalReaction>
</comment>
<comment type="catalytic activity">
    <reaction evidence="2">
        <text>1-hexadecanoyl-2-(9Z-octadecenoyl)-sn-glycerol + hexadecanoyl-CoA = 1,3-dihexadecanoyl-2-(9Z-octadecenoyl)glycerol + CoA</text>
        <dbReference type="Rhea" id="RHEA:38299"/>
        <dbReference type="ChEBI" id="CHEBI:57287"/>
        <dbReference type="ChEBI" id="CHEBI:57379"/>
        <dbReference type="ChEBI" id="CHEBI:75466"/>
        <dbReference type="ChEBI" id="CHEBI:75688"/>
    </reaction>
    <physiologicalReaction direction="left-to-right" evidence="9">
        <dbReference type="Rhea" id="RHEA:38300"/>
    </physiologicalReaction>
</comment>
<comment type="catalytic activity">
    <reaction evidence="3">
        <text>all-trans-retinol + hexadecanoyl-CoA = all-trans-retinyl hexadecanoate + CoA</text>
        <dbReference type="Rhea" id="RHEA:38175"/>
        <dbReference type="ChEBI" id="CHEBI:17336"/>
        <dbReference type="ChEBI" id="CHEBI:17616"/>
        <dbReference type="ChEBI" id="CHEBI:57287"/>
        <dbReference type="ChEBI" id="CHEBI:57379"/>
    </reaction>
    <physiologicalReaction direction="left-to-right" evidence="10">
        <dbReference type="Rhea" id="RHEA:38176"/>
    </physiologicalReaction>
</comment>
<comment type="catalytic activity">
    <reaction evidence="5">
        <text>1-O-(9Z-octadecenyl)-glycerol + (9Z)-octadecenoyl-CoA = 1-O-(9Z-octadecyl)-3-(9Z-octadecenoyl)-glycerol + CoA</text>
        <dbReference type="Rhea" id="RHEA:55340"/>
        <dbReference type="ChEBI" id="CHEBI:34116"/>
        <dbReference type="ChEBI" id="CHEBI:57287"/>
        <dbReference type="ChEBI" id="CHEBI:57387"/>
        <dbReference type="ChEBI" id="CHEBI:197429"/>
    </reaction>
    <physiologicalReaction direction="left-to-right" evidence="11">
        <dbReference type="Rhea" id="RHEA:55341"/>
    </physiologicalReaction>
</comment>
<comment type="catalytic activity">
    <reaction evidence="5">
        <text>1-O-(9Z-octadecyl)-3-(9Z-octadecenoyl)-glycerol + (9Z)-octadecenoyl-CoA = 1-O-(9Z-octadecenyl)-2,3-di-(9Z-octadecenoyl)glycerol + CoA</text>
        <dbReference type="Rhea" id="RHEA:55344"/>
        <dbReference type="ChEBI" id="CHEBI:57287"/>
        <dbReference type="ChEBI" id="CHEBI:57387"/>
        <dbReference type="ChEBI" id="CHEBI:138735"/>
        <dbReference type="ChEBI" id="CHEBI:197429"/>
    </reaction>
    <physiologicalReaction direction="left-to-right" evidence="11">
        <dbReference type="Rhea" id="RHEA:55345"/>
    </physiologicalReaction>
</comment>
<comment type="biophysicochemical properties">
    <kinetics>
        <Vmax evidence="2">9.3 nmol/min/mg enzyme with diacylglycerol as substrate</Vmax>
        <Vmax evidence="2">22.8 nmol/min/mg enzyme with 2-monoacylglycerol as substrate</Vmax>
    </kinetics>
</comment>
<comment type="pathway">
    <text evidence="4">Glycerolipid metabolism; triacylglycerol biosynthesis.</text>
</comment>
<comment type="interaction">
    <interactant intactId="EBI-25840143">
        <id>Q86VF5-3</id>
    </interactant>
    <interactant intactId="EBI-2115097">
        <id>P07339</id>
        <label>CTSD</label>
    </interactant>
    <organismsDiffer>false</organismsDiffer>
    <experiments>3</experiments>
</comment>
<comment type="interaction">
    <interactant intactId="EBI-25840143">
        <id>Q86VF5-3</id>
    </interactant>
    <interactant intactId="EBI-10976677">
        <id>G5E9A7</id>
        <label>DMWD</label>
    </interactant>
    <organismsDiffer>false</organismsDiffer>
    <experiments>3</experiments>
</comment>
<comment type="interaction">
    <interactant intactId="EBI-25840143">
        <id>Q86VF5-3</id>
    </interactant>
    <interactant intactId="EBI-747754">
        <id>P28799</id>
        <label>GRN</label>
    </interactant>
    <organismsDiffer>false</organismsDiffer>
    <experiments>3</experiments>
</comment>
<comment type="interaction">
    <interactant intactId="EBI-25840143">
        <id>Q86VF5-3</id>
    </interactant>
    <interactant intactId="EBI-5235340">
        <id>Q7Z699</id>
        <label>SPRED1</label>
    </interactant>
    <organismsDiffer>false</organismsDiffer>
    <experiments>3</experiments>
</comment>
<comment type="interaction">
    <interactant intactId="EBI-25840143">
        <id>Q86VF5-3</id>
    </interactant>
    <interactant intactId="EBI-720609">
        <id>O76024</id>
        <label>WFS1</label>
    </interactant>
    <organismsDiffer>false</organismsDiffer>
    <experiments>3</experiments>
</comment>
<comment type="subcellular location">
    <subcellularLocation>
        <location evidence="4">Endoplasmic reticulum membrane</location>
        <topology evidence="8">Multi-pass membrane protein</topology>
    </subcellularLocation>
    <subcellularLocation>
        <location evidence="4">Cytoplasm</location>
        <location evidence="4">Perinuclear region</location>
    </subcellularLocation>
</comment>
<comment type="alternative products">
    <event type="alternative splicing"/>
    <isoform>
        <id>Q86VF5-1</id>
        <name>1</name>
        <sequence type="displayed"/>
    </isoform>
    <isoform>
        <id>Q86VF5-2</id>
        <name>2</name>
        <sequence type="described" ref="VSP_020361 VSP_020362"/>
    </isoform>
    <isoform>
        <id>Q86VF5-3</id>
        <name>3</name>
        <sequence type="described" ref="VSP_020363"/>
    </isoform>
</comment>
<comment type="tissue specificity">
    <text evidence="2">Selectively expressed in the digestive system. Highly expressed in the ileum, and at lower level in jejunum, duodenum, colon, cecum and the rectum. Not expressed in the stomach and the esophagus and trachea. Expressed at very low level in liver.</text>
</comment>
<comment type="PTM">
    <text evidence="4">Ubiquitinated. Ubiquitination leads to proteasomal degradation.</text>
</comment>
<comment type="similarity">
    <text evidence="8">Belongs to the diacylglycerol acyltransferase family.</text>
</comment>
<comment type="sequence caution" evidence="8">
    <conflict type="erroneous gene model prediction">
        <sequence resource="EMBL-CDS" id="AAD45832"/>
    </conflict>
</comment>
<feature type="chain" id="PRO_0000249067" description="2-acylglycerol O-acyltransferase 3">
    <location>
        <begin position="1"/>
        <end position="341"/>
    </location>
</feature>
<feature type="transmembrane region" description="Helical" evidence="1">
    <location>
        <begin position="29"/>
        <end position="49"/>
    </location>
</feature>
<feature type="transmembrane region" description="Helical" evidence="1">
    <location>
        <begin position="50"/>
        <end position="70"/>
    </location>
</feature>
<feature type="transmembrane region" description="Helical" evidence="1">
    <location>
        <begin position="137"/>
        <end position="157"/>
    </location>
</feature>
<feature type="glycosylation site" description="N-linked (GlcNAc...) asparagine" evidence="1">
    <location>
        <position position="126"/>
    </location>
</feature>
<feature type="splice variant" id="VSP_020361" description="In isoform 2." evidence="6">
    <original>ASLVPVYSFGENDIFRLKAFATGSWQHWCQLTFKKLMGFSPCIFWGRGLFSATSWGLL</original>
    <variation>GPPHPRPPAPPPHRGGSQSLSRPLHDGPGAALRGAQGKLWGPRFHLPHLHLGLAAAFR</variation>
    <location>
        <begin position="224"/>
        <end position="281"/>
    </location>
</feature>
<feature type="splice variant" id="VSP_020362" description="In isoform 2." evidence="6">
    <location>
        <begin position="282"/>
        <end position="341"/>
    </location>
</feature>
<feature type="splice variant" id="VSP_020363" description="In isoform 3." evidence="6">
    <original>VGRPIPVPQRLHPTEEEVNHYHALYMTALEQLFEEHKESCGVPASTCLTFI</original>
    <variation>GECPPPGGRPPAAAWASGIPRPPVSLSLQWAAPSPSPSASTPPRRKSITITPST</variation>
    <location>
        <begin position="291"/>
        <end position="341"/>
    </location>
</feature>
<feature type="mutagenesis site" description="Reduces 60% 2-acylglycerol O-acyltransferase activity. No effect on diacylglycerol O-acyltransferase activity." evidence="4">
    <original>C</original>
    <variation>A</variation>
    <location>
        <position position="265"/>
    </location>
</feature>
<feature type="mutagenesis site" description="Catalitically inactive. No 2-acylglycerol O-acyltransferase neither diacylglycerol O-acyltransferase activities." evidence="4">
    <original>C</original>
    <variation>Y</variation>
    <location>
        <position position="265"/>
    </location>
</feature>
<feature type="sequence conflict" description="In Ref. 4; AAI00954." evidence="8" ref="4">
    <original>C</original>
    <variation>Y</variation>
    <location>
        <position position="265"/>
    </location>
</feature>
<gene>
    <name evidence="12" type="primary">MOGAT3</name>
    <name type="synonym">DC7</name>
    <name type="synonym">DGAT2L7</name>
    <name type="ORF">UNQ9383/PRO34208</name>
</gene>
<evidence type="ECO:0000255" key="1"/>
<evidence type="ECO:0000269" key="2">
    <source>
    </source>
</evidence>
<evidence type="ECO:0000269" key="3">
    <source>
    </source>
</evidence>
<evidence type="ECO:0000269" key="4">
    <source>
    </source>
</evidence>
<evidence type="ECO:0000269" key="5">
    <source>
    </source>
</evidence>
<evidence type="ECO:0000303" key="6">
    <source>
    </source>
</evidence>
<evidence type="ECO:0000303" key="7">
    <source>
    </source>
</evidence>
<evidence type="ECO:0000305" key="8"/>
<evidence type="ECO:0000305" key="9">
    <source>
    </source>
</evidence>
<evidence type="ECO:0000305" key="10">
    <source>
    </source>
</evidence>
<evidence type="ECO:0000305" key="11">
    <source>
    </source>
</evidence>
<evidence type="ECO:0000312" key="12">
    <source>
        <dbReference type="HGNC" id="HGNC:23249"/>
    </source>
</evidence>